<comment type="similarity">
    <text evidence="1">Belongs to the UPF0173 family.</text>
</comment>
<organism>
    <name type="scientific">Bacillus thuringiensis subsp. konkukian (strain 97-27)</name>
    <dbReference type="NCBI Taxonomy" id="281309"/>
    <lineage>
        <taxon>Bacteria</taxon>
        <taxon>Bacillati</taxon>
        <taxon>Bacillota</taxon>
        <taxon>Bacilli</taxon>
        <taxon>Bacillales</taxon>
        <taxon>Bacillaceae</taxon>
        <taxon>Bacillus</taxon>
        <taxon>Bacillus cereus group</taxon>
    </lineage>
</organism>
<name>Y4343_BACHK</name>
<proteinExistence type="inferred from homology"/>
<sequence>MKVSYHGHSVVKIETNGKVILIDPFLTGNPKTDLKAEDVKVDAILLSHGHGDHVGDTVELAKKNNAVVVAPFELATFLSWQGVNTHPMHIGGSHEFDFGKVKFTQAFHGSSYIDEENKTITYTGMPAGILVTAEEKTLYHAGDTALFSDMKLIGELNNIDVAFLPIGDNFTMGPEDAVLAAKWVQAKTVVPMHYNTFPVIEQDPYQFVEKLQNCTGKVLEAGESITL</sequence>
<evidence type="ECO:0000255" key="1">
    <source>
        <dbReference type="HAMAP-Rule" id="MF_00457"/>
    </source>
</evidence>
<gene>
    <name type="ordered locus">BT9727_4343</name>
</gene>
<feature type="chain" id="PRO_0000156373" description="UPF0173 metal-dependent hydrolase BT9727_4343">
    <location>
        <begin position="1"/>
        <end position="227"/>
    </location>
</feature>
<protein>
    <recommendedName>
        <fullName evidence="1">UPF0173 metal-dependent hydrolase BT9727_4343</fullName>
    </recommendedName>
</protein>
<keyword id="KW-0378">Hydrolase</keyword>
<accession>Q6HCR8</accession>
<reference key="1">
    <citation type="journal article" date="2006" name="J. Bacteriol.">
        <title>Pathogenomic sequence analysis of Bacillus cereus and Bacillus thuringiensis isolates closely related to Bacillus anthracis.</title>
        <authorList>
            <person name="Han C.S."/>
            <person name="Xie G."/>
            <person name="Challacombe J.F."/>
            <person name="Altherr M.R."/>
            <person name="Bhotika S.S."/>
            <person name="Bruce D."/>
            <person name="Campbell C.S."/>
            <person name="Campbell M.L."/>
            <person name="Chen J."/>
            <person name="Chertkov O."/>
            <person name="Cleland C."/>
            <person name="Dimitrijevic M."/>
            <person name="Doggett N.A."/>
            <person name="Fawcett J.J."/>
            <person name="Glavina T."/>
            <person name="Goodwin L.A."/>
            <person name="Hill K.K."/>
            <person name="Hitchcock P."/>
            <person name="Jackson P.J."/>
            <person name="Keim P."/>
            <person name="Kewalramani A.R."/>
            <person name="Longmire J."/>
            <person name="Lucas S."/>
            <person name="Malfatti S."/>
            <person name="McMurry K."/>
            <person name="Meincke L.J."/>
            <person name="Misra M."/>
            <person name="Moseman B.L."/>
            <person name="Mundt M."/>
            <person name="Munk A.C."/>
            <person name="Okinaka R.T."/>
            <person name="Parson-Quintana B."/>
            <person name="Reilly L.P."/>
            <person name="Richardson P."/>
            <person name="Robinson D.L."/>
            <person name="Rubin E."/>
            <person name="Saunders E."/>
            <person name="Tapia R."/>
            <person name="Tesmer J.G."/>
            <person name="Thayer N."/>
            <person name="Thompson L.S."/>
            <person name="Tice H."/>
            <person name="Ticknor L.O."/>
            <person name="Wills P.L."/>
            <person name="Brettin T.S."/>
            <person name="Gilna P."/>
        </authorList>
    </citation>
    <scope>NUCLEOTIDE SEQUENCE [LARGE SCALE GENOMIC DNA]</scope>
    <source>
        <strain>97-27</strain>
    </source>
</reference>
<dbReference type="EMBL" id="AE017355">
    <property type="protein sequence ID" value="AAT60906.1"/>
    <property type="molecule type" value="Genomic_DNA"/>
</dbReference>
<dbReference type="RefSeq" id="WP_000868943.1">
    <property type="nucleotide sequence ID" value="NC_005957.1"/>
</dbReference>
<dbReference type="RefSeq" id="YP_038658.1">
    <property type="nucleotide sequence ID" value="NC_005957.1"/>
</dbReference>
<dbReference type="SMR" id="Q6HCR8"/>
<dbReference type="KEGG" id="btk:BT9727_4343"/>
<dbReference type="PATRIC" id="fig|281309.8.peg.4630"/>
<dbReference type="HOGENOM" id="CLU_070010_4_1_9"/>
<dbReference type="Proteomes" id="UP000001301">
    <property type="component" value="Chromosome"/>
</dbReference>
<dbReference type="GO" id="GO:0016787">
    <property type="term" value="F:hydrolase activity"/>
    <property type="evidence" value="ECO:0007669"/>
    <property type="project" value="UniProtKB-UniRule"/>
</dbReference>
<dbReference type="Gene3D" id="3.60.15.10">
    <property type="entry name" value="Ribonuclease Z/Hydroxyacylglutathione hydrolase-like"/>
    <property type="match status" value="1"/>
</dbReference>
<dbReference type="HAMAP" id="MF_00457">
    <property type="entry name" value="UPF0173"/>
    <property type="match status" value="1"/>
</dbReference>
<dbReference type="InterPro" id="IPR001279">
    <property type="entry name" value="Metallo-B-lactamas"/>
</dbReference>
<dbReference type="InterPro" id="IPR036866">
    <property type="entry name" value="RibonucZ/Hydroxyglut_hydro"/>
</dbReference>
<dbReference type="InterPro" id="IPR022877">
    <property type="entry name" value="UPF0173"/>
</dbReference>
<dbReference type="InterPro" id="IPR050114">
    <property type="entry name" value="UPF0173_UPF0282_UlaG_hydrolase"/>
</dbReference>
<dbReference type="NCBIfam" id="NF001911">
    <property type="entry name" value="PRK00685.1"/>
    <property type="match status" value="1"/>
</dbReference>
<dbReference type="PANTHER" id="PTHR43546:SF3">
    <property type="entry name" value="UPF0173 METAL-DEPENDENT HYDROLASE MJ1163"/>
    <property type="match status" value="1"/>
</dbReference>
<dbReference type="PANTHER" id="PTHR43546">
    <property type="entry name" value="UPF0173 METAL-DEPENDENT HYDROLASE MJ1163-RELATED"/>
    <property type="match status" value="1"/>
</dbReference>
<dbReference type="Pfam" id="PF12706">
    <property type="entry name" value="Lactamase_B_2"/>
    <property type="match status" value="1"/>
</dbReference>
<dbReference type="SMART" id="SM00849">
    <property type="entry name" value="Lactamase_B"/>
    <property type="match status" value="1"/>
</dbReference>
<dbReference type="SUPFAM" id="SSF56281">
    <property type="entry name" value="Metallo-hydrolase/oxidoreductase"/>
    <property type="match status" value="1"/>
</dbReference>